<protein>
    <recommendedName>
        <fullName evidence="2">Small ribosomal subunit protein uS3c</fullName>
    </recommendedName>
    <alternativeName>
        <fullName>30S ribosomal protein S3, chloroplastic</fullName>
    </alternativeName>
</protein>
<organism>
    <name type="scientific">Picea abies</name>
    <name type="common">Norway spruce</name>
    <name type="synonym">Picea excelsa</name>
    <dbReference type="NCBI Taxonomy" id="3329"/>
    <lineage>
        <taxon>Eukaryota</taxon>
        <taxon>Viridiplantae</taxon>
        <taxon>Streptophyta</taxon>
        <taxon>Embryophyta</taxon>
        <taxon>Tracheophyta</taxon>
        <taxon>Spermatophyta</taxon>
        <taxon>Pinopsida</taxon>
        <taxon>Pinidae</taxon>
        <taxon>Conifers I</taxon>
        <taxon>Pinales</taxon>
        <taxon>Pinaceae</taxon>
        <taxon>Picea</taxon>
    </lineage>
</organism>
<name>RR3_PICAB</name>
<reference key="1">
    <citation type="submission" date="1997-03" db="EMBL/GenBank/DDBJ databases">
        <authorList>
            <person name="Kluemper S."/>
            <person name="Kanka S."/>
            <person name="Riesner D."/>
            <person name="Etscheid M."/>
        </authorList>
    </citation>
    <scope>NUCLEOTIDE SEQUENCE [GENOMIC DNA]</scope>
</reference>
<gene>
    <name type="primary">rps3</name>
</gene>
<comment type="subunit">
    <text evidence="1">Part of the 30S ribosomal subunit.</text>
</comment>
<comment type="subcellular location">
    <subcellularLocation>
        <location>Plastid</location>
        <location>Chloroplast</location>
    </subcellularLocation>
</comment>
<comment type="similarity">
    <text evidence="2">Belongs to the universal ribosomal protein uS3 family.</text>
</comment>
<keyword id="KW-0150">Chloroplast</keyword>
<keyword id="KW-0934">Plastid</keyword>
<keyword id="KW-0687">Ribonucleoprotein</keyword>
<keyword id="KW-0689">Ribosomal protein</keyword>
<keyword id="KW-0694">RNA-binding</keyword>
<keyword id="KW-0699">rRNA-binding</keyword>
<evidence type="ECO:0000250" key="1"/>
<evidence type="ECO:0000305" key="2"/>
<feature type="chain" id="PRO_0000130299" description="Small ribosomal subunit protein uS3c">
    <location>
        <begin position="1"/>
        <end position="218"/>
    </location>
</feature>
<feature type="domain" description="KH type-2">
    <location>
        <begin position="47"/>
        <end position="120"/>
    </location>
</feature>
<accession>O62951</accession>
<proteinExistence type="inferred from homology"/>
<sequence>MAQKINPLGFRLGVTQNDRSHWFAQQRNYSKDLREDQKIRTCIENYVRTHIKSSSNYGGIARVEISRKIDLIQVKIYIGFPNLLLIEGRGFQGIEKLKNDVLNMLDSVDRKLHIAIEKVAKPYRKPNILAEYIALQLEKRVPFRKTMKKAIELAEREEVEGIQIQIAGRLDGKEIARVEWDRGGRVPLQTIRARIDYCYYPVQTIYGVLGIKIWILEE</sequence>
<dbReference type="EMBL" id="U92462">
    <property type="protein sequence ID" value="AAC95497.1"/>
    <property type="molecule type" value="Genomic_DNA"/>
</dbReference>
<dbReference type="PIR" id="T11807">
    <property type="entry name" value="T11807"/>
</dbReference>
<dbReference type="RefSeq" id="YP_008082848.1">
    <property type="nucleotide sequence ID" value="NC_021456.1"/>
</dbReference>
<dbReference type="SMR" id="O62951"/>
<dbReference type="GeneID" id="16185516"/>
<dbReference type="GO" id="GO:0009507">
    <property type="term" value="C:chloroplast"/>
    <property type="evidence" value="ECO:0007669"/>
    <property type="project" value="UniProtKB-SubCell"/>
</dbReference>
<dbReference type="GO" id="GO:0022627">
    <property type="term" value="C:cytosolic small ribosomal subunit"/>
    <property type="evidence" value="ECO:0007669"/>
    <property type="project" value="TreeGrafter"/>
</dbReference>
<dbReference type="GO" id="GO:0019843">
    <property type="term" value="F:rRNA binding"/>
    <property type="evidence" value="ECO:0007669"/>
    <property type="project" value="UniProtKB-UniRule"/>
</dbReference>
<dbReference type="GO" id="GO:0003735">
    <property type="term" value="F:structural constituent of ribosome"/>
    <property type="evidence" value="ECO:0007669"/>
    <property type="project" value="InterPro"/>
</dbReference>
<dbReference type="GO" id="GO:0006412">
    <property type="term" value="P:translation"/>
    <property type="evidence" value="ECO:0007669"/>
    <property type="project" value="UniProtKB-UniRule"/>
</dbReference>
<dbReference type="CDD" id="cd02412">
    <property type="entry name" value="KH-II_30S_S3"/>
    <property type="match status" value="1"/>
</dbReference>
<dbReference type="Gene3D" id="3.30.300.20">
    <property type="match status" value="1"/>
</dbReference>
<dbReference type="Gene3D" id="3.30.1140.32">
    <property type="entry name" value="Ribosomal protein S3, C-terminal domain"/>
    <property type="match status" value="1"/>
</dbReference>
<dbReference type="HAMAP" id="MF_01309_B">
    <property type="entry name" value="Ribosomal_uS3_B"/>
    <property type="match status" value="1"/>
</dbReference>
<dbReference type="InterPro" id="IPR015946">
    <property type="entry name" value="KH_dom-like_a/b"/>
</dbReference>
<dbReference type="InterPro" id="IPR004044">
    <property type="entry name" value="KH_dom_type_2"/>
</dbReference>
<dbReference type="InterPro" id="IPR009019">
    <property type="entry name" value="KH_sf_prok-type"/>
</dbReference>
<dbReference type="InterPro" id="IPR036419">
    <property type="entry name" value="Ribosomal_S3_C_sf"/>
</dbReference>
<dbReference type="InterPro" id="IPR005704">
    <property type="entry name" value="Ribosomal_uS3_bac-typ"/>
</dbReference>
<dbReference type="InterPro" id="IPR001351">
    <property type="entry name" value="Ribosomal_uS3_C"/>
</dbReference>
<dbReference type="InterPro" id="IPR018280">
    <property type="entry name" value="Ribosomal_uS3_CS"/>
</dbReference>
<dbReference type="NCBIfam" id="TIGR01009">
    <property type="entry name" value="rpsC_bact"/>
    <property type="match status" value="1"/>
</dbReference>
<dbReference type="PANTHER" id="PTHR11760">
    <property type="entry name" value="30S/40S RIBOSOMAL PROTEIN S3"/>
    <property type="match status" value="1"/>
</dbReference>
<dbReference type="PANTHER" id="PTHR11760:SF19">
    <property type="entry name" value="SMALL RIBOSOMAL SUBUNIT PROTEIN US3C"/>
    <property type="match status" value="1"/>
</dbReference>
<dbReference type="Pfam" id="PF00189">
    <property type="entry name" value="Ribosomal_S3_C"/>
    <property type="match status" value="1"/>
</dbReference>
<dbReference type="SUPFAM" id="SSF54814">
    <property type="entry name" value="Prokaryotic type KH domain (KH-domain type II)"/>
    <property type="match status" value="1"/>
</dbReference>
<dbReference type="SUPFAM" id="SSF54821">
    <property type="entry name" value="Ribosomal protein S3 C-terminal domain"/>
    <property type="match status" value="1"/>
</dbReference>
<dbReference type="PROSITE" id="PS50823">
    <property type="entry name" value="KH_TYPE_2"/>
    <property type="match status" value="1"/>
</dbReference>
<dbReference type="PROSITE" id="PS00548">
    <property type="entry name" value="RIBOSOMAL_S3"/>
    <property type="match status" value="1"/>
</dbReference>
<geneLocation type="chloroplast"/>